<proteinExistence type="evidence at protein level"/>
<feature type="initiator methionine" description="Removed" evidence="29">
    <location>
        <position position="1"/>
    </location>
</feature>
<feature type="chain" id="PRO_0000363988" description="N-(sulfonatooxy)alkenimidothioic acid sulfate-lyase (epithionitrile-forming)">
    <location>
        <begin position="2"/>
        <end position="341"/>
    </location>
</feature>
<feature type="repeat" description="Kelch 1" evidence="3">
    <location>
        <begin position="34"/>
        <end position="82"/>
    </location>
</feature>
<feature type="repeat" description="Kelch 2" evidence="3">
    <location>
        <begin position="87"/>
        <end position="133"/>
    </location>
</feature>
<feature type="repeat" description="Kelch 3" evidence="3">
    <location>
        <begin position="139"/>
        <end position="194"/>
    </location>
</feature>
<feature type="repeat" description="Kelch 4" evidence="3">
    <location>
        <begin position="203"/>
        <end position="249"/>
    </location>
</feature>
<feature type="region of interest" description="Disordered" evidence="4">
    <location>
        <begin position="1"/>
        <end position="24"/>
    </location>
</feature>
<feature type="active site" description="Proton donor" evidence="24 25">
    <location>
        <position position="94"/>
    </location>
</feature>
<feature type="active site" description="Proton donor" evidence="25 26">
    <location>
        <position position="157"/>
    </location>
</feature>
<feature type="binding site" evidence="24 25">
    <location>
        <position position="46"/>
    </location>
    <ligand>
        <name>a (Z)-N-(sulfonatooxy)alkanimidothioate</name>
        <dbReference type="ChEBI" id="CHEBI:183089"/>
    </ligand>
    <ligandPart>
        <name>sulfur</name>
        <dbReference type="ChEBI" id="CHEBI:26833"/>
    </ligandPart>
</feature>
<feature type="binding site" evidence="24 25">
    <location>
        <position position="94"/>
    </location>
    <ligand>
        <name>a (Z)-N-(sulfonatooxy)alkanimidothioate</name>
        <dbReference type="ChEBI" id="CHEBI:183089"/>
    </ligand>
    <ligandPart>
        <name>sulfur</name>
        <dbReference type="ChEBI" id="CHEBI:26833"/>
    </ligandPart>
</feature>
<feature type="binding site" evidence="26">
    <location>
        <position position="129"/>
    </location>
    <ligand>
        <name>a (Z)-N-(sulfonatooxy)alkanimidothioate</name>
        <dbReference type="ChEBI" id="CHEBI:183089"/>
    </ligand>
</feature>
<feature type="binding site" evidence="24 25">
    <location>
        <position position="130"/>
    </location>
    <ligand>
        <name>a (Z)-N-(sulfonatooxy)alkanimidothioate</name>
        <dbReference type="ChEBI" id="CHEBI:183089"/>
    </ligand>
</feature>
<feature type="binding site" evidence="25 26">
    <location>
        <position position="157"/>
    </location>
    <ligand>
        <name>a (Z)-N-(sulfonatooxy)alkanimidothioate</name>
        <dbReference type="ChEBI" id="CHEBI:183089"/>
    </ligand>
    <ligandPart>
        <name>sulfur</name>
        <dbReference type="ChEBI" id="CHEBI:26833"/>
    </ligandPart>
</feature>
<feature type="binding site" evidence="24 25 26">
    <location>
        <position position="186"/>
    </location>
    <ligand>
        <name>a (Z)-N-(sulfonatooxy)alkanimidothioate</name>
        <dbReference type="ChEBI" id="CHEBI:183089"/>
    </ligand>
</feature>
<feature type="binding site" evidence="24 25">
    <location>
        <position position="211"/>
    </location>
    <ligand>
        <name>a (Z)-N-(sulfonatooxy)alkanimidothioate</name>
        <dbReference type="ChEBI" id="CHEBI:183089"/>
    </ligand>
    <ligandPart>
        <name>sulfur</name>
        <dbReference type="ChEBI" id="CHEBI:26833"/>
    </ligandPart>
</feature>
<feature type="binding site" evidence="24 25 26">
    <location>
        <position position="244"/>
    </location>
    <ligand>
        <name>a (Z)-N-(sulfonatooxy)alkanimidothioate</name>
        <dbReference type="ChEBI" id="CHEBI:183089"/>
    </ligand>
</feature>
<feature type="binding site" evidence="24 25 26">
    <location>
        <position position="260"/>
    </location>
    <ligand>
        <name>Fe(2+)</name>
        <dbReference type="ChEBI" id="CHEBI:29033"/>
    </ligand>
</feature>
<feature type="binding site" evidence="24 25 26">
    <location>
        <position position="264"/>
    </location>
    <ligand>
        <name>Fe(2+)</name>
        <dbReference type="ChEBI" id="CHEBI:29033"/>
    </ligand>
</feature>
<feature type="binding site" evidence="24 25 26">
    <location>
        <position position="268"/>
    </location>
    <ligand>
        <name>Fe(2+)</name>
        <dbReference type="ChEBI" id="CHEBI:29033"/>
    </ligand>
</feature>
<feature type="binding site" evidence="24 25 26">
    <location>
        <position position="303"/>
    </location>
    <ligand>
        <name>a (Z)-N-(sulfonatooxy)alkanimidothioate</name>
        <dbReference type="ChEBI" id="CHEBI:183089"/>
    </ligand>
</feature>
<feature type="splice variant" id="VSP_036395" description="In isoform 2." evidence="17 22">
    <location>
        <begin position="1"/>
        <end position="80"/>
    </location>
</feature>
<feature type="sequence variant" description="In strain: cv. Ei-2 and cv. Tac-0.">
    <original>G</original>
    <variation>E</variation>
    <location>
        <position position="13"/>
    </location>
</feature>
<feature type="sequence variant" description="In strain: cv. Ei-2 and cv. Tac-0.">
    <original>T</original>
    <variation>S</variation>
    <location>
        <position position="18"/>
    </location>
</feature>
<feature type="sequence variant" description="In strain: cv. Ag-0, cv. Br-0, cv. CIBC-5, cv. Ei-2, cv. Gy-0, cv. HR-10, cv. HR-5, cv. Kin-0, cv. KNO-10, cv. KNO-18, cv. Lz-0, cv. NFA-8, cv. NFA-10, cv. Pna-10, cv. Ra-0, cv. Rmx-A180, cv. RRS-10, cv. Se-0, cv. Sq-1, cv. Tac-0, cv. Van-0, cv. Var2-6 and cv. Yo-0.">
    <original>A</original>
    <variation>P</variation>
    <location>
        <position position="308"/>
    </location>
</feature>
<feature type="mutagenesis site" description="Strongly reduced activity." evidence="14">
    <original>N</original>
    <variation>Y</variation>
    <location>
        <position position="45"/>
    </location>
</feature>
<feature type="mutagenesis site" description="Reduced activity. Strongly reduced activity; when associated with A-94. Reduced activity; when associated with A-94 and A-211." evidence="14">
    <original>K</original>
    <variation>A</variation>
    <location>
        <position position="46"/>
    </location>
</feature>
<feature type="mutagenesis site" description="Strongly increased ability to hydolyze benzylglucosinolate but slightly enhanced activity when allylglucosinolate is used as substrate in the presence of myrosinase. Increased ability to hydolyze benzylglucosinolate but slightly reduced activity when allylglucosinolate is used as substrate in the presence of myrosinase; when associated with A-211. Reduced activity; when associated with A-46. Strongly reduced activity; when associated with A-46 and A-211." evidence="14">
    <original>R</original>
    <variation>A</variation>
    <location>
        <position position="94"/>
    </location>
</feature>
<feature type="mutagenesis site" description="Reduced activity." evidence="14">
    <original>R</original>
    <variation>K</variation>
    <location>
        <position position="94"/>
    </location>
</feature>
<feature type="mutagenesis site" description="Lost activity." evidence="14">
    <original>F</original>
    <variation>A</variation>
    <location>
        <position position="130"/>
    </location>
</feature>
<feature type="mutagenesis site" description="Strongly reduced activity." evidence="14">
    <original>G</original>
    <variation>M</variation>
    <location>
        <position position="186"/>
    </location>
</feature>
<feature type="mutagenesis site" description="Increased ability to hydolyze benzylglucosinolate but normal activity when allylglucosinolate is used as substrate in the presence of myrosinase. Increased ability to hydolyze benzylglucosinolate but slightly reduced activity when allylglucosinolate is used as substrate in the presence of myrosinase; when associated with A-94. Strongly reduced activity; when associated with A-46 and A-94." evidence="14">
    <original>K</original>
    <variation>A</variation>
    <location>
        <position position="211"/>
    </location>
</feature>
<feature type="mutagenesis site" description="Strongly reduced activity upon benzylglucosinolate but slightly reduced activity when allylglucosinolate is used as substrate in the presence of myrosinase." evidence="14">
    <original>V</original>
    <variation>C</variation>
    <location>
        <position position="244"/>
    </location>
</feature>
<feature type="mutagenesis site" description="Lost activity." evidence="14">
    <original>E</original>
    <variation>A</variation>
    <variation>Q</variation>
    <location>
        <position position="260"/>
    </location>
</feature>
<feature type="mutagenesis site" description="Strongly reduced activity." evidence="14">
    <original>D</original>
    <variation>A</variation>
    <location>
        <position position="264"/>
    </location>
</feature>
<feature type="mutagenesis site" description="Lost activity." evidence="14">
    <original>D</original>
    <variation>N</variation>
    <location>
        <position position="264"/>
    </location>
</feature>
<feature type="mutagenesis site" description="Strongly reduced activity." evidence="14">
    <original>P</original>
    <variation>N</variation>
    <location>
        <position position="300"/>
    </location>
</feature>
<feature type="mutagenesis site" description="Strongly reduced activity." evidence="14">
    <original>R</original>
    <variation>L</variation>
    <location>
        <position position="301"/>
    </location>
</feature>
<feature type="strand" evidence="30">
    <location>
        <begin position="7"/>
        <end position="11"/>
    </location>
</feature>
<feature type="strand" evidence="30">
    <location>
        <begin position="27"/>
        <end position="31"/>
    </location>
</feature>
<feature type="strand" evidence="30">
    <location>
        <begin position="34"/>
        <end position="38"/>
    </location>
</feature>
<feature type="strand" evidence="30">
    <location>
        <begin position="41"/>
        <end position="43"/>
    </location>
</feature>
<feature type="strand" evidence="30">
    <location>
        <begin position="53"/>
        <end position="56"/>
    </location>
</feature>
<feature type="turn" evidence="30">
    <location>
        <begin position="57"/>
        <end position="60"/>
    </location>
</feature>
<feature type="strand" evidence="30">
    <location>
        <begin position="61"/>
        <end position="64"/>
    </location>
</feature>
<feature type="strand" evidence="30">
    <location>
        <begin position="68"/>
        <end position="70"/>
    </location>
</feature>
<feature type="strand" evidence="30">
    <location>
        <begin position="80"/>
        <end position="84"/>
    </location>
</feature>
<feature type="strand" evidence="30">
    <location>
        <begin position="87"/>
        <end position="91"/>
    </location>
</feature>
<feature type="strand" evidence="30">
    <location>
        <begin position="103"/>
        <end position="107"/>
    </location>
</feature>
<feature type="turn" evidence="30">
    <location>
        <begin position="108"/>
        <end position="111"/>
    </location>
</feature>
<feature type="strand" evidence="30">
    <location>
        <begin position="112"/>
        <end position="117"/>
    </location>
</feature>
<feature type="strand" evidence="30">
    <location>
        <begin position="128"/>
        <end position="130"/>
    </location>
</feature>
<feature type="strand" evidence="30">
    <location>
        <begin position="132"/>
        <end position="136"/>
    </location>
</feature>
<feature type="strand" evidence="30">
    <location>
        <begin position="139"/>
        <end position="143"/>
    </location>
</feature>
<feature type="strand" evidence="30">
    <location>
        <begin position="151"/>
        <end position="153"/>
    </location>
</feature>
<feature type="strand" evidence="30">
    <location>
        <begin position="161"/>
        <end position="165"/>
    </location>
</feature>
<feature type="turn" evidence="30">
    <location>
        <begin position="166"/>
        <end position="169"/>
    </location>
</feature>
<feature type="strand" evidence="30">
    <location>
        <begin position="170"/>
        <end position="173"/>
    </location>
</feature>
<feature type="strand" evidence="30">
    <location>
        <begin position="184"/>
        <end position="186"/>
    </location>
</feature>
<feature type="strand" evidence="30">
    <location>
        <begin position="188"/>
        <end position="192"/>
    </location>
</feature>
<feature type="strand" evidence="30">
    <location>
        <begin position="195"/>
        <end position="203"/>
    </location>
</feature>
<feature type="strand" evidence="30">
    <location>
        <begin position="214"/>
        <end position="223"/>
    </location>
</feature>
<feature type="turn" evidence="30">
    <location>
        <begin position="224"/>
        <end position="227"/>
    </location>
</feature>
<feature type="strand" evidence="30">
    <location>
        <begin position="228"/>
        <end position="231"/>
    </location>
</feature>
<feature type="strand" evidence="30">
    <location>
        <begin position="235"/>
        <end position="237"/>
    </location>
</feature>
<feature type="strand" evidence="30">
    <location>
        <begin position="246"/>
        <end position="250"/>
    </location>
</feature>
<feature type="strand" evidence="30">
    <location>
        <begin position="253"/>
        <end position="262"/>
    </location>
</feature>
<feature type="turn" evidence="30">
    <location>
        <begin position="265"/>
        <end position="268"/>
    </location>
</feature>
<feature type="strand" evidence="30">
    <location>
        <begin position="273"/>
        <end position="282"/>
    </location>
</feature>
<feature type="turn" evidence="30">
    <location>
        <begin position="283"/>
        <end position="286"/>
    </location>
</feature>
<feature type="strand" evidence="30">
    <location>
        <begin position="287"/>
        <end position="290"/>
    </location>
</feature>
<feature type="strand" evidence="30">
    <location>
        <begin position="301"/>
        <end position="303"/>
    </location>
</feature>
<feature type="strand" evidence="30">
    <location>
        <begin position="305"/>
        <end position="311"/>
    </location>
</feature>
<feature type="strand" evidence="30">
    <location>
        <begin position="314"/>
        <end position="320"/>
    </location>
</feature>
<feature type="strand" evidence="30">
    <location>
        <begin position="333"/>
        <end position="338"/>
    </location>
</feature>
<name>ESP_ARATH</name>
<keyword id="KW-0002">3D-structure</keyword>
<keyword id="KW-0025">Alternative splicing</keyword>
<keyword id="KW-0963">Cytoplasm</keyword>
<keyword id="KW-0408">Iron</keyword>
<keyword id="KW-0880">Kelch repeat</keyword>
<keyword id="KW-0456">Lyase</keyword>
<keyword id="KW-0539">Nucleus</keyword>
<keyword id="KW-1185">Reference proteome</keyword>
<keyword id="KW-0677">Repeat</keyword>
<sequence length="341" mass="37008">MAPTLQGQWIKVGQKGGTGPGPRSSHGIAAVGDKLYSFGGELTPNKHIDKDLYVFDFNTQTWSIAQPKGDAPTVSCLGVRMVAVGTKIYIFGGRDENRNFENFRSYDTVTSEWTFLTKLDEVGGPEARTFHSMASDENHVYVFGGVSKGGTMNTPTRFRTIEAYNIADGKWAQLPDPGDNFEKRGGAGFAVVQGKIWVVYGFATSIVPGGKDDYESNAVQFYDPASKKWTEVETTGAKPSARSVFAHAVVGKYIIIFAGEVWPDLNGHYGPGTLSNEGYALDTETLVWEKLGEEGAPAIPRGWTAYTAATVDGKNGLLMHGGKLPTNERTDDLYFYAVNSA</sequence>
<accession>Q8RY71</accession>
<accession>B0LYN4</accession>
<accession>B0LYN5</accession>
<accession>B0LYN6</accession>
<accession>B0LYN7</accession>
<accession>B0LYN8</accession>
<accession>B0LYP0</accession>
<accession>B0LYP2</accession>
<accession>B0LYP4</accession>
<accession>B0LYP6</accession>
<accession>B0LYS4</accession>
<accession>B0LYT0</accession>
<accession>B0LYT3</accession>
<accession>B0LYT8</accession>
<accession>B0LYT9</accession>
<accession>B0LYU6</accession>
<accession>B0LYU8</accession>
<accession>B0LYV4</accession>
<accession>B0LYW2</accession>
<accession>B0LYW3</accession>
<accession>B0LYW5</accession>
<accession>B0LYW7</accession>
<accession>B0LYX3</accession>
<accession>B0LYX4</accession>
<accession>B0LYX6</accession>
<accession>B0LYX7</accession>
<accession>Q39104</accession>
<accession>Q93VB6</accession>
<accession>Q9SYG0</accession>
<dbReference type="EC" id="4.8.1.5" evidence="12 14"/>
<dbReference type="EC" id="4.8.1.6" evidence="5 7 13 14"/>
<dbReference type="EMBL" id="X71915">
    <property type="protein sequence ID" value="CAA50730.1"/>
    <property type="molecule type" value="mRNA"/>
</dbReference>
<dbReference type="EMBL" id="AF416786">
    <property type="protein sequence ID" value="AAL14622.1"/>
    <property type="molecule type" value="Genomic_DNA"/>
</dbReference>
<dbReference type="EMBL" id="AF416790">
    <property type="protein sequence ID" value="AAL14625.1"/>
    <property type="molecule type" value="Genomic_DNA"/>
</dbReference>
<dbReference type="EMBL" id="AF416785">
    <property type="protein sequence ID" value="AAL14621.1"/>
    <property type="molecule type" value="Genomic_DNA"/>
</dbReference>
<dbReference type="EMBL" id="AF416787">
    <property type="protein sequence ID" value="AAL14623.1"/>
    <property type="molecule type" value="Genomic_DNA"/>
</dbReference>
<dbReference type="EMBL" id="AF416789">
    <property type="protein sequence ID" value="AAL14624.1"/>
    <property type="molecule type" value="Genomic_DNA"/>
</dbReference>
<dbReference type="EMBL" id="AC006577">
    <property type="protein sequence ID" value="AAD25776.1"/>
    <property type="status" value="ALT_SEQ"/>
    <property type="molecule type" value="Genomic_DNA"/>
</dbReference>
<dbReference type="EMBL" id="CP002684">
    <property type="protein sequence ID" value="AEE33039.1"/>
    <property type="molecule type" value="Genomic_DNA"/>
</dbReference>
<dbReference type="EMBL" id="CP002684">
    <property type="protein sequence ID" value="AEE33040.1"/>
    <property type="molecule type" value="Genomic_DNA"/>
</dbReference>
<dbReference type="EMBL" id="AY074550">
    <property type="protein sequence ID" value="AAL69516.1"/>
    <property type="molecule type" value="mRNA"/>
</dbReference>
<dbReference type="EMBL" id="BT033156">
    <property type="protein sequence ID" value="ACF75545.1"/>
    <property type="molecule type" value="mRNA"/>
</dbReference>
<dbReference type="EMBL" id="EU404377">
    <property type="protein sequence ID" value="ABY88775.1"/>
    <property type="molecule type" value="Genomic_DNA"/>
</dbReference>
<dbReference type="EMBL" id="EU404378">
    <property type="protein sequence ID" value="ABY88776.1"/>
    <property type="molecule type" value="Genomic_DNA"/>
</dbReference>
<dbReference type="EMBL" id="EU404379">
    <property type="protein sequence ID" value="ABY88777.1"/>
    <property type="molecule type" value="Genomic_DNA"/>
</dbReference>
<dbReference type="EMBL" id="EU404380">
    <property type="protein sequence ID" value="ABY88778.1"/>
    <property type="molecule type" value="Genomic_DNA"/>
</dbReference>
<dbReference type="EMBL" id="EU404381">
    <property type="protein sequence ID" value="ABY88779.1"/>
    <property type="molecule type" value="Genomic_DNA"/>
</dbReference>
<dbReference type="EMBL" id="EU404382">
    <property type="protein sequence ID" value="ABY88780.1"/>
    <property type="molecule type" value="Genomic_DNA"/>
</dbReference>
<dbReference type="EMBL" id="EU404383">
    <property type="protein sequence ID" value="ABY88781.1"/>
    <property type="molecule type" value="Genomic_DNA"/>
</dbReference>
<dbReference type="EMBL" id="EU404384">
    <property type="protein sequence ID" value="ABY88782.1"/>
    <property type="molecule type" value="Genomic_DNA"/>
</dbReference>
<dbReference type="EMBL" id="EU404385">
    <property type="protein sequence ID" value="ABY88783.1"/>
    <property type="molecule type" value="Genomic_DNA"/>
</dbReference>
<dbReference type="EMBL" id="EU404386">
    <property type="protein sequence ID" value="ABY88784.1"/>
    <property type="molecule type" value="Genomic_DNA"/>
</dbReference>
<dbReference type="EMBL" id="EU404387">
    <property type="protein sequence ID" value="ABY88785.1"/>
    <property type="molecule type" value="Genomic_DNA"/>
</dbReference>
<dbReference type="EMBL" id="EU404388">
    <property type="protein sequence ID" value="ABY88786.1"/>
    <property type="molecule type" value="Genomic_DNA"/>
</dbReference>
<dbReference type="EMBL" id="EU404389">
    <property type="protein sequence ID" value="ABY88787.1"/>
    <property type="molecule type" value="Genomic_DNA"/>
</dbReference>
<dbReference type="EMBL" id="EU404390">
    <property type="protein sequence ID" value="ABY88788.1"/>
    <property type="molecule type" value="Genomic_DNA"/>
</dbReference>
<dbReference type="EMBL" id="EU404391">
    <property type="protein sequence ID" value="ABY88789.1"/>
    <property type="molecule type" value="Genomic_DNA"/>
</dbReference>
<dbReference type="EMBL" id="EU404392">
    <property type="protein sequence ID" value="ABY88790.1"/>
    <property type="molecule type" value="Genomic_DNA"/>
</dbReference>
<dbReference type="EMBL" id="EU404393">
    <property type="protein sequence ID" value="ABY88791.1"/>
    <property type="molecule type" value="Genomic_DNA"/>
</dbReference>
<dbReference type="EMBL" id="EU404394">
    <property type="protein sequence ID" value="ABY88792.1"/>
    <property type="molecule type" value="Genomic_DNA"/>
</dbReference>
<dbReference type="EMBL" id="EU404395">
    <property type="protein sequence ID" value="ABY88793.1"/>
    <property type="molecule type" value="Genomic_DNA"/>
</dbReference>
<dbReference type="EMBL" id="EU404396">
    <property type="protein sequence ID" value="ABY88794.1"/>
    <property type="molecule type" value="Genomic_DNA"/>
</dbReference>
<dbReference type="EMBL" id="EU404397">
    <property type="protein sequence ID" value="ABY88795.1"/>
    <property type="molecule type" value="Genomic_DNA"/>
</dbReference>
<dbReference type="EMBL" id="EU404398">
    <property type="protein sequence ID" value="ABY88796.1"/>
    <property type="molecule type" value="Genomic_DNA"/>
</dbReference>
<dbReference type="EMBL" id="EU404399">
    <property type="protein sequence ID" value="ABY88797.1"/>
    <property type="molecule type" value="Genomic_DNA"/>
</dbReference>
<dbReference type="EMBL" id="EU404400">
    <property type="protein sequence ID" value="ABY88798.1"/>
    <property type="molecule type" value="Genomic_DNA"/>
</dbReference>
<dbReference type="EMBL" id="EU404401">
    <property type="protein sequence ID" value="ABY88799.1"/>
    <property type="molecule type" value="Genomic_DNA"/>
</dbReference>
<dbReference type="EMBL" id="EU404402">
    <property type="protein sequence ID" value="ABY88800.1"/>
    <property type="molecule type" value="Genomic_DNA"/>
</dbReference>
<dbReference type="EMBL" id="EU404403">
    <property type="protein sequence ID" value="ABY88801.1"/>
    <property type="molecule type" value="Genomic_DNA"/>
</dbReference>
<dbReference type="EMBL" id="EU404404">
    <property type="protein sequence ID" value="ABY88802.1"/>
    <property type="molecule type" value="Genomic_DNA"/>
</dbReference>
<dbReference type="EMBL" id="EU404405">
    <property type="protein sequence ID" value="ABY88803.1"/>
    <property type="molecule type" value="Genomic_DNA"/>
</dbReference>
<dbReference type="EMBL" id="EU404406">
    <property type="protein sequence ID" value="ABY88804.1"/>
    <property type="molecule type" value="Genomic_DNA"/>
</dbReference>
<dbReference type="EMBL" id="EU404407">
    <property type="protein sequence ID" value="ABY88805.1"/>
    <property type="molecule type" value="Genomic_DNA"/>
</dbReference>
<dbReference type="EMBL" id="EU404408">
    <property type="protein sequence ID" value="ABY88806.1"/>
    <property type="molecule type" value="Genomic_DNA"/>
</dbReference>
<dbReference type="EMBL" id="EU404409">
    <property type="protein sequence ID" value="ABY88807.1"/>
    <property type="molecule type" value="Genomic_DNA"/>
</dbReference>
<dbReference type="EMBL" id="EU404410">
    <property type="protein sequence ID" value="ABY88808.1"/>
    <property type="molecule type" value="Genomic_DNA"/>
</dbReference>
<dbReference type="EMBL" id="EU404411">
    <property type="protein sequence ID" value="ABY88809.1"/>
    <property type="molecule type" value="Genomic_DNA"/>
</dbReference>
<dbReference type="EMBL" id="EU404412">
    <property type="protein sequence ID" value="ABY88810.1"/>
    <property type="molecule type" value="Genomic_DNA"/>
</dbReference>
<dbReference type="EMBL" id="EU404413">
    <property type="protein sequence ID" value="ABY88811.1"/>
    <property type="molecule type" value="Genomic_DNA"/>
</dbReference>
<dbReference type="EMBL" id="EU404414">
    <property type="protein sequence ID" value="ABY88812.1"/>
    <property type="molecule type" value="Genomic_DNA"/>
</dbReference>
<dbReference type="EMBL" id="EU404415">
    <property type="protein sequence ID" value="ABY88813.1"/>
    <property type="molecule type" value="Genomic_DNA"/>
</dbReference>
<dbReference type="EMBL" id="EU404416">
    <property type="protein sequence ID" value="ABY88814.1"/>
    <property type="molecule type" value="Genomic_DNA"/>
</dbReference>
<dbReference type="EMBL" id="EU404417">
    <property type="protein sequence ID" value="ABY88815.1"/>
    <property type="molecule type" value="Genomic_DNA"/>
</dbReference>
<dbReference type="EMBL" id="EU404418">
    <property type="protein sequence ID" value="ABY88816.1"/>
    <property type="molecule type" value="Genomic_DNA"/>
</dbReference>
<dbReference type="EMBL" id="EU404419">
    <property type="protein sequence ID" value="ABY88817.1"/>
    <property type="molecule type" value="Genomic_DNA"/>
</dbReference>
<dbReference type="EMBL" id="EU404420">
    <property type="protein sequence ID" value="ABY88818.1"/>
    <property type="molecule type" value="Genomic_DNA"/>
</dbReference>
<dbReference type="EMBL" id="EU404421">
    <property type="protein sequence ID" value="ABY88819.1"/>
    <property type="molecule type" value="Genomic_DNA"/>
</dbReference>
<dbReference type="EMBL" id="EU404422">
    <property type="protein sequence ID" value="ABY88820.1"/>
    <property type="molecule type" value="Genomic_DNA"/>
</dbReference>
<dbReference type="EMBL" id="EU404423">
    <property type="protein sequence ID" value="ABY88821.1"/>
    <property type="molecule type" value="Genomic_DNA"/>
</dbReference>
<dbReference type="EMBL" id="EU404424">
    <property type="protein sequence ID" value="ABY88822.1"/>
    <property type="molecule type" value="Genomic_DNA"/>
</dbReference>
<dbReference type="EMBL" id="EU404425">
    <property type="protein sequence ID" value="ABY88823.1"/>
    <property type="molecule type" value="Genomic_DNA"/>
</dbReference>
<dbReference type="EMBL" id="EU404426">
    <property type="protein sequence ID" value="ABY88824.1"/>
    <property type="molecule type" value="Genomic_DNA"/>
</dbReference>
<dbReference type="EMBL" id="EU404427">
    <property type="protein sequence ID" value="ABY88825.1"/>
    <property type="molecule type" value="Genomic_DNA"/>
</dbReference>
<dbReference type="EMBL" id="EU404428">
    <property type="protein sequence ID" value="ABY88826.1"/>
    <property type="molecule type" value="Genomic_DNA"/>
</dbReference>
<dbReference type="EMBL" id="EU404429">
    <property type="protein sequence ID" value="ABY88827.1"/>
    <property type="molecule type" value="Genomic_DNA"/>
</dbReference>
<dbReference type="EMBL" id="EU404430">
    <property type="protein sequence ID" value="ABY88828.1"/>
    <property type="molecule type" value="Genomic_DNA"/>
</dbReference>
<dbReference type="EMBL" id="EU404431">
    <property type="protein sequence ID" value="ABY88829.1"/>
    <property type="molecule type" value="Genomic_DNA"/>
</dbReference>
<dbReference type="EMBL" id="EU404432">
    <property type="protein sequence ID" value="ABY88830.1"/>
    <property type="molecule type" value="Genomic_DNA"/>
</dbReference>
<dbReference type="EMBL" id="EU404433">
    <property type="protein sequence ID" value="ABY88831.1"/>
    <property type="molecule type" value="Genomic_DNA"/>
</dbReference>
<dbReference type="EMBL" id="EU404434">
    <property type="protein sequence ID" value="ABY88832.1"/>
    <property type="molecule type" value="Genomic_DNA"/>
</dbReference>
<dbReference type="EMBL" id="EU404435">
    <property type="protein sequence ID" value="ABY88833.1"/>
    <property type="molecule type" value="Genomic_DNA"/>
</dbReference>
<dbReference type="EMBL" id="EU404436">
    <property type="protein sequence ID" value="ABY88834.1"/>
    <property type="molecule type" value="Genomic_DNA"/>
</dbReference>
<dbReference type="EMBL" id="EU404437">
    <property type="protein sequence ID" value="ABY88835.1"/>
    <property type="molecule type" value="Genomic_DNA"/>
</dbReference>
<dbReference type="EMBL" id="EU404438">
    <property type="protein sequence ID" value="ABY88836.1"/>
    <property type="molecule type" value="Genomic_DNA"/>
</dbReference>
<dbReference type="EMBL" id="EU404439">
    <property type="protein sequence ID" value="ABY88837.1"/>
    <property type="molecule type" value="Genomic_DNA"/>
</dbReference>
<dbReference type="EMBL" id="EU404440">
    <property type="protein sequence ID" value="ABY88838.1"/>
    <property type="molecule type" value="Genomic_DNA"/>
</dbReference>
<dbReference type="EMBL" id="EU404441">
    <property type="protein sequence ID" value="ABY88839.1"/>
    <property type="molecule type" value="Genomic_DNA"/>
</dbReference>
<dbReference type="EMBL" id="EU404443">
    <property type="protein sequence ID" value="ABY88840.1"/>
    <property type="molecule type" value="Genomic_DNA"/>
</dbReference>
<dbReference type="EMBL" id="EU404444">
    <property type="protein sequence ID" value="ABY88841.1"/>
    <property type="molecule type" value="Genomic_DNA"/>
</dbReference>
<dbReference type="EMBL" id="EU404445">
    <property type="protein sequence ID" value="ABY88842.1"/>
    <property type="molecule type" value="Genomic_DNA"/>
</dbReference>
<dbReference type="EMBL" id="EU404446">
    <property type="protein sequence ID" value="ABY88843.1"/>
    <property type="molecule type" value="Genomic_DNA"/>
</dbReference>
<dbReference type="EMBL" id="EU404447">
    <property type="protein sequence ID" value="ABY88844.1"/>
    <property type="molecule type" value="Genomic_DNA"/>
</dbReference>
<dbReference type="EMBL" id="EU404448">
    <property type="protein sequence ID" value="ABY88845.1"/>
    <property type="molecule type" value="Genomic_DNA"/>
</dbReference>
<dbReference type="EMBL" id="EU404450">
    <property type="protein sequence ID" value="ABY88846.1"/>
    <property type="molecule type" value="Genomic_DNA"/>
</dbReference>
<dbReference type="EMBL" id="EU404451">
    <property type="protein sequence ID" value="ABY88847.1"/>
    <property type="molecule type" value="Genomic_DNA"/>
</dbReference>
<dbReference type="EMBL" id="EU404452">
    <property type="protein sequence ID" value="ABY88848.1"/>
    <property type="molecule type" value="Genomic_DNA"/>
</dbReference>
<dbReference type="EMBL" id="EU404453">
    <property type="protein sequence ID" value="ABY88849.1"/>
    <property type="molecule type" value="Genomic_DNA"/>
</dbReference>
<dbReference type="EMBL" id="EU404454">
    <property type="protein sequence ID" value="ABY88850.1"/>
    <property type="molecule type" value="Genomic_DNA"/>
</dbReference>
<dbReference type="EMBL" id="EU404455">
    <property type="protein sequence ID" value="ABY88851.1"/>
    <property type="molecule type" value="Genomic_DNA"/>
</dbReference>
<dbReference type="EMBL" id="EU404456">
    <property type="protein sequence ID" value="ABY88852.1"/>
    <property type="molecule type" value="Genomic_DNA"/>
</dbReference>
<dbReference type="EMBL" id="EU404457">
    <property type="protein sequence ID" value="ABY88853.1"/>
    <property type="molecule type" value="Genomic_DNA"/>
</dbReference>
<dbReference type="EMBL" id="EU404458">
    <property type="protein sequence ID" value="ABY88854.1"/>
    <property type="molecule type" value="Genomic_DNA"/>
</dbReference>
<dbReference type="EMBL" id="EU404459">
    <property type="protein sequence ID" value="ABY88855.1"/>
    <property type="molecule type" value="Genomic_DNA"/>
</dbReference>
<dbReference type="EMBL" id="EU404460">
    <property type="protein sequence ID" value="ABY88856.1"/>
    <property type="molecule type" value="Genomic_DNA"/>
</dbReference>
<dbReference type="EMBL" id="EU404461">
    <property type="protein sequence ID" value="ABY88857.1"/>
    <property type="molecule type" value="Genomic_DNA"/>
</dbReference>
<dbReference type="EMBL" id="EU404462">
    <property type="protein sequence ID" value="ABY88858.1"/>
    <property type="molecule type" value="Genomic_DNA"/>
</dbReference>
<dbReference type="EMBL" id="EU404463">
    <property type="protein sequence ID" value="ABY88859.1"/>
    <property type="molecule type" value="Genomic_DNA"/>
</dbReference>
<dbReference type="EMBL" id="EU404464">
    <property type="protein sequence ID" value="ABY88860.1"/>
    <property type="molecule type" value="Genomic_DNA"/>
</dbReference>
<dbReference type="EMBL" id="EU404465">
    <property type="protein sequence ID" value="ABY88861.1"/>
    <property type="molecule type" value="Genomic_DNA"/>
</dbReference>
<dbReference type="EMBL" id="EU404466">
    <property type="protein sequence ID" value="ABY88862.1"/>
    <property type="molecule type" value="Genomic_DNA"/>
</dbReference>
<dbReference type="EMBL" id="EU404467">
    <property type="protein sequence ID" value="ABY88863.1"/>
    <property type="molecule type" value="Genomic_DNA"/>
</dbReference>
<dbReference type="EMBL" id="EU404468">
    <property type="protein sequence ID" value="ABY88864.1"/>
    <property type="molecule type" value="Genomic_DNA"/>
</dbReference>
<dbReference type="EMBL" id="EU404469">
    <property type="protein sequence ID" value="ABY88865.1"/>
    <property type="molecule type" value="Genomic_DNA"/>
</dbReference>
<dbReference type="EMBL" id="EU404470">
    <property type="protein sequence ID" value="ABY88866.1"/>
    <property type="molecule type" value="Genomic_DNA"/>
</dbReference>
<dbReference type="EMBL" id="EU404471">
    <property type="protein sequence ID" value="ABY88867.1"/>
    <property type="molecule type" value="Genomic_DNA"/>
</dbReference>
<dbReference type="EMBL" id="EU404472">
    <property type="protein sequence ID" value="ABY88868.1"/>
    <property type="molecule type" value="Genomic_DNA"/>
</dbReference>
<dbReference type="PIR" id="A96581">
    <property type="entry name" value="A96581"/>
</dbReference>
<dbReference type="PIR" id="S33464">
    <property type="entry name" value="S33464"/>
</dbReference>
<dbReference type="RefSeq" id="NP_175806.3">
    <molecule id="Q8RY71-1"/>
    <property type="nucleotide sequence ID" value="NM_104281.3"/>
</dbReference>
<dbReference type="RefSeq" id="NP_850963.1">
    <molecule id="Q8RY71-2"/>
    <property type="nucleotide sequence ID" value="NM_180632.2"/>
</dbReference>
<dbReference type="PDB" id="5GQ0">
    <property type="method" value="X-ray"/>
    <property type="resolution" value="2.31 A"/>
    <property type="chains" value="A/B=1-341"/>
</dbReference>
<dbReference type="PDBsum" id="5GQ0"/>
<dbReference type="SMR" id="Q8RY71"/>
<dbReference type="BioGRID" id="27067">
    <property type="interactions" value="2"/>
</dbReference>
<dbReference type="FunCoup" id="Q8RY71">
    <property type="interactions" value="64"/>
</dbReference>
<dbReference type="IntAct" id="Q8RY71">
    <property type="interactions" value="1"/>
</dbReference>
<dbReference type="STRING" id="3702.Q8RY71"/>
<dbReference type="PaxDb" id="3702-AT1G54040.2"/>
<dbReference type="ProteomicsDB" id="222295">
    <molecule id="Q8RY71-1"/>
</dbReference>
<dbReference type="EnsemblPlants" id="AT1G54040.1">
    <molecule id="Q8RY71-2"/>
    <property type="protein sequence ID" value="AT1G54040.1"/>
    <property type="gene ID" value="AT1G54040"/>
</dbReference>
<dbReference type="EnsemblPlants" id="AT1G54040.2">
    <molecule id="Q8RY71-1"/>
    <property type="protein sequence ID" value="AT1G54040.2"/>
    <property type="gene ID" value="AT1G54040"/>
</dbReference>
<dbReference type="GeneID" id="841842"/>
<dbReference type="Gramene" id="AT1G54040.1">
    <molecule id="Q8RY71-2"/>
    <property type="protein sequence ID" value="AT1G54040.1"/>
    <property type="gene ID" value="AT1G54040"/>
</dbReference>
<dbReference type="Gramene" id="AT1G54040.2">
    <molecule id="Q8RY71-1"/>
    <property type="protein sequence ID" value="AT1G54040.2"/>
    <property type="gene ID" value="AT1G54040"/>
</dbReference>
<dbReference type="KEGG" id="ath:AT1G54040"/>
<dbReference type="Araport" id="AT1G54040"/>
<dbReference type="TAIR" id="AT1G54040">
    <property type="gene designation" value="ESP"/>
</dbReference>
<dbReference type="eggNOG" id="KOG0379">
    <property type="taxonomic scope" value="Eukaryota"/>
</dbReference>
<dbReference type="HOGENOM" id="CLU_030461_0_0_1"/>
<dbReference type="InParanoid" id="Q8RY71"/>
<dbReference type="OMA" id="WIWIMAD"/>
<dbReference type="OrthoDB" id="10250130at2759"/>
<dbReference type="PhylomeDB" id="Q8RY71"/>
<dbReference type="BioCyc" id="ARA:AT1G54040-MONOMER"/>
<dbReference type="BioCyc" id="MetaCyc:AT1G54040-MONOMER"/>
<dbReference type="PRO" id="PR:Q8RY71"/>
<dbReference type="Proteomes" id="UP000006548">
    <property type="component" value="Chromosome 1"/>
</dbReference>
<dbReference type="ExpressionAtlas" id="Q8RY71">
    <property type="expression patterns" value="baseline and differential"/>
</dbReference>
<dbReference type="GO" id="GO:0005737">
    <property type="term" value="C:cytoplasm"/>
    <property type="evidence" value="ECO:0007669"/>
    <property type="project" value="UniProtKB-SubCell"/>
</dbReference>
<dbReference type="GO" id="GO:0005634">
    <property type="term" value="C:nucleus"/>
    <property type="evidence" value="ECO:0000314"/>
    <property type="project" value="TAIR"/>
</dbReference>
<dbReference type="GO" id="GO:0030234">
    <property type="term" value="F:enzyme regulator activity"/>
    <property type="evidence" value="ECO:0000314"/>
    <property type="project" value="TAIR"/>
</dbReference>
<dbReference type="GO" id="GO:0042802">
    <property type="term" value="F:identical protein binding"/>
    <property type="evidence" value="ECO:0000314"/>
    <property type="project" value="UniProtKB"/>
</dbReference>
<dbReference type="GO" id="GO:0016829">
    <property type="term" value="F:lyase activity"/>
    <property type="evidence" value="ECO:0007669"/>
    <property type="project" value="UniProtKB-KW"/>
</dbReference>
<dbReference type="GO" id="GO:0042803">
    <property type="term" value="F:protein homodimerization activity"/>
    <property type="evidence" value="ECO:0000314"/>
    <property type="project" value="UniProtKB"/>
</dbReference>
<dbReference type="GO" id="GO:0042742">
    <property type="term" value="P:defense response to bacterium"/>
    <property type="evidence" value="ECO:0000315"/>
    <property type="project" value="TAIR"/>
</dbReference>
<dbReference type="GO" id="GO:0019762">
    <property type="term" value="P:glucosinolate catabolic process"/>
    <property type="evidence" value="ECO:0000314"/>
    <property type="project" value="TAIR"/>
</dbReference>
<dbReference type="GO" id="GO:0010150">
    <property type="term" value="P:leaf senescence"/>
    <property type="evidence" value="ECO:0000315"/>
    <property type="project" value="TAIR"/>
</dbReference>
<dbReference type="GO" id="GO:0080028">
    <property type="term" value="P:nitrile biosynthetic process"/>
    <property type="evidence" value="ECO:0000315"/>
    <property type="project" value="UniProtKB"/>
</dbReference>
<dbReference type="GO" id="GO:0009753">
    <property type="term" value="P:response to jasmonic acid"/>
    <property type="evidence" value="ECO:0000315"/>
    <property type="project" value="TAIR"/>
</dbReference>
<dbReference type="FunFam" id="2.120.10.80:FF:000225">
    <property type="entry name" value="Epithiospecifier protein"/>
    <property type="match status" value="1"/>
</dbReference>
<dbReference type="Gene3D" id="2.120.10.80">
    <property type="entry name" value="Kelch-type beta propeller"/>
    <property type="match status" value="2"/>
</dbReference>
<dbReference type="InterPro" id="IPR015915">
    <property type="entry name" value="Kelch-typ_b-propeller"/>
</dbReference>
<dbReference type="InterPro" id="IPR006652">
    <property type="entry name" value="Kelch_1"/>
</dbReference>
<dbReference type="PANTHER" id="PTHR47435:SF2">
    <property type="entry name" value="EPITHIOSPECIFIER PROTEIN"/>
    <property type="match status" value="1"/>
</dbReference>
<dbReference type="PANTHER" id="PTHR47435">
    <property type="entry name" value="KELCH REPEAT PROTEIN (AFU_ORTHOLOGUE AFUA_5G12780)"/>
    <property type="match status" value="1"/>
</dbReference>
<dbReference type="Pfam" id="PF24681">
    <property type="entry name" value="Kelch_KLHDC2_KLHL20_DRC7"/>
    <property type="match status" value="1"/>
</dbReference>
<dbReference type="SMART" id="SM00612">
    <property type="entry name" value="Kelch"/>
    <property type="match status" value="2"/>
</dbReference>
<dbReference type="SUPFAM" id="SSF117281">
    <property type="entry name" value="Kelch motif"/>
    <property type="match status" value="1"/>
</dbReference>
<evidence type="ECO:0000250" key="1">
    <source>
        <dbReference type="UniProtKB" id="G1FNI6"/>
    </source>
</evidence>
<evidence type="ECO:0000250" key="2">
    <source>
        <dbReference type="UniProtKB" id="Q93XW5"/>
    </source>
</evidence>
<evidence type="ECO:0000255" key="3"/>
<evidence type="ECO:0000256" key="4">
    <source>
        <dbReference type="SAM" id="MobiDB-lite"/>
    </source>
</evidence>
<evidence type="ECO:0000269" key="5">
    <source>
    </source>
</evidence>
<evidence type="ECO:0000269" key="6">
    <source>
    </source>
</evidence>
<evidence type="ECO:0000269" key="7">
    <source>
    </source>
</evidence>
<evidence type="ECO:0000269" key="8">
    <source>
    </source>
</evidence>
<evidence type="ECO:0000269" key="9">
    <source>
    </source>
</evidence>
<evidence type="ECO:0000269" key="10">
    <source>
    </source>
</evidence>
<evidence type="ECO:0000269" key="11">
    <source>
    </source>
</evidence>
<evidence type="ECO:0000269" key="12">
    <source>
    </source>
</evidence>
<evidence type="ECO:0000269" key="13">
    <source>
    </source>
</evidence>
<evidence type="ECO:0000269" key="14">
    <source>
    </source>
</evidence>
<evidence type="ECO:0000269" key="15">
    <source>
    </source>
</evidence>
<evidence type="ECO:0000303" key="16">
    <source>
    </source>
</evidence>
<evidence type="ECO:0000303" key="17">
    <source>
    </source>
</evidence>
<evidence type="ECO:0000303" key="18">
    <source>
    </source>
</evidence>
<evidence type="ECO:0000303" key="19">
    <source>
    </source>
</evidence>
<evidence type="ECO:0000303" key="20">
    <source>
    </source>
</evidence>
<evidence type="ECO:0000303" key="21">
    <source>
    </source>
</evidence>
<evidence type="ECO:0000303" key="22">
    <source ref="6"/>
</evidence>
<evidence type="ECO:0000305" key="23"/>
<evidence type="ECO:0000305" key="24">
    <source>
    </source>
</evidence>
<evidence type="ECO:0000305" key="25">
    <source>
    </source>
</evidence>
<evidence type="ECO:0000305" key="26">
    <source>
    </source>
</evidence>
<evidence type="ECO:0000312" key="27">
    <source>
        <dbReference type="Araport" id="AT1G54040"/>
    </source>
</evidence>
<evidence type="ECO:0000312" key="28">
    <source>
        <dbReference type="EMBL" id="AAD25776.1"/>
    </source>
</evidence>
<evidence type="ECO:0007744" key="29">
    <source>
    </source>
</evidence>
<evidence type="ECO:0007829" key="30">
    <source>
        <dbReference type="PDB" id="5GQ0"/>
    </source>
</evidence>
<gene>
    <name evidence="16 18 21" type="primary">ESP</name>
    <name evidence="19" type="synonym">ESR</name>
    <name evidence="20" type="synonym">TASTY</name>
    <name evidence="27" type="ordered locus">At1g54040</name>
    <name evidence="28" type="ORF">F15I1.12</name>
</gene>
<organism>
    <name type="scientific">Arabidopsis thaliana</name>
    <name type="common">Mouse-ear cress</name>
    <dbReference type="NCBI Taxonomy" id="3702"/>
    <lineage>
        <taxon>Eukaryota</taxon>
        <taxon>Viridiplantae</taxon>
        <taxon>Streptophyta</taxon>
        <taxon>Embryophyta</taxon>
        <taxon>Tracheophyta</taxon>
        <taxon>Spermatophyta</taxon>
        <taxon>Magnoliopsida</taxon>
        <taxon>eudicotyledons</taxon>
        <taxon>Gunneridae</taxon>
        <taxon>Pentapetalae</taxon>
        <taxon>rosids</taxon>
        <taxon>malvids</taxon>
        <taxon>Brassicales</taxon>
        <taxon>Brassicaceae</taxon>
        <taxon>Camelineae</taxon>
        <taxon>Arabidopsis</taxon>
    </lineage>
</organism>
<reference key="1">
    <citation type="submission" date="1993-05" db="EMBL/GenBank/DDBJ databases">
        <authorList>
            <person name="Quigley F.R."/>
        </authorList>
    </citation>
    <scope>NUCLEOTIDE SEQUENCE [MRNA]</scope>
    <source>
        <strain>cv. C24</strain>
    </source>
</reference>
<reference key="2">
    <citation type="journal article" date="2001" name="Plant Cell">
        <title>The Arabidopsis epithiospecifier protein promotes the hydrolysis of glucosinolates to nitriles and influences Trichoplusia ni herbivory.</title>
        <authorList>
            <person name="Lambrix V."/>
            <person name="Reichelt M."/>
            <person name="Mitchell-Olds T."/>
            <person name="Kliebenstein D.J."/>
            <person name="Gershenzon J."/>
        </authorList>
    </citation>
    <scope>NUCLEOTIDE SEQUENCE [GENOMIC DNA]</scope>
    <scope>FUNCTION</scope>
    <scope>POLYMORPHISM</scope>
    <scope>CATALYTIC ACTIVITY</scope>
    <scope>COFACTOR</scope>
    <scope>ACTIVITY REGULATION</scope>
    <source>
        <strain>cv. Columbia</strain>
        <strain>cv. Da(1)-12</strain>
        <strain>cv. Ei-2</strain>
        <strain>cv. Landsberg erecta</strain>
        <strain>cv. Ru-0</strain>
        <strain>cv. Tac-0</strain>
    </source>
</reference>
<reference key="3">
    <citation type="journal article" date="2000" name="Nature">
        <title>Sequence and analysis of chromosome 1 of the plant Arabidopsis thaliana.</title>
        <authorList>
            <person name="Theologis A."/>
            <person name="Ecker J.R."/>
            <person name="Palm C.J."/>
            <person name="Federspiel N.A."/>
            <person name="Kaul S."/>
            <person name="White O."/>
            <person name="Alonso J."/>
            <person name="Altafi H."/>
            <person name="Araujo R."/>
            <person name="Bowman C.L."/>
            <person name="Brooks S.Y."/>
            <person name="Buehler E."/>
            <person name="Chan A."/>
            <person name="Chao Q."/>
            <person name="Chen H."/>
            <person name="Cheuk R.F."/>
            <person name="Chin C.W."/>
            <person name="Chung M.K."/>
            <person name="Conn L."/>
            <person name="Conway A.B."/>
            <person name="Conway A.R."/>
            <person name="Creasy T.H."/>
            <person name="Dewar K."/>
            <person name="Dunn P."/>
            <person name="Etgu P."/>
            <person name="Feldblyum T.V."/>
            <person name="Feng J.-D."/>
            <person name="Fong B."/>
            <person name="Fujii C.Y."/>
            <person name="Gill J.E."/>
            <person name="Goldsmith A.D."/>
            <person name="Haas B."/>
            <person name="Hansen N.F."/>
            <person name="Hughes B."/>
            <person name="Huizar L."/>
            <person name="Hunter J.L."/>
            <person name="Jenkins J."/>
            <person name="Johnson-Hopson C."/>
            <person name="Khan S."/>
            <person name="Khaykin E."/>
            <person name="Kim C.J."/>
            <person name="Koo H.L."/>
            <person name="Kremenetskaia I."/>
            <person name="Kurtz D.B."/>
            <person name="Kwan A."/>
            <person name="Lam B."/>
            <person name="Langin-Hooper S."/>
            <person name="Lee A."/>
            <person name="Lee J.M."/>
            <person name="Lenz C.A."/>
            <person name="Li J.H."/>
            <person name="Li Y.-P."/>
            <person name="Lin X."/>
            <person name="Liu S.X."/>
            <person name="Liu Z.A."/>
            <person name="Luros J.S."/>
            <person name="Maiti R."/>
            <person name="Marziali A."/>
            <person name="Militscher J."/>
            <person name="Miranda M."/>
            <person name="Nguyen M."/>
            <person name="Nierman W.C."/>
            <person name="Osborne B.I."/>
            <person name="Pai G."/>
            <person name="Peterson J."/>
            <person name="Pham P.K."/>
            <person name="Rizzo M."/>
            <person name="Rooney T."/>
            <person name="Rowley D."/>
            <person name="Sakano H."/>
            <person name="Salzberg S.L."/>
            <person name="Schwartz J.R."/>
            <person name="Shinn P."/>
            <person name="Southwick A.M."/>
            <person name="Sun H."/>
            <person name="Tallon L.J."/>
            <person name="Tambunga G."/>
            <person name="Toriumi M.J."/>
            <person name="Town C.D."/>
            <person name="Utterback T."/>
            <person name="Van Aken S."/>
            <person name="Vaysberg M."/>
            <person name="Vysotskaia V.S."/>
            <person name="Walker M."/>
            <person name="Wu D."/>
            <person name="Yu G."/>
            <person name="Fraser C.M."/>
            <person name="Venter J.C."/>
            <person name="Davis R.W."/>
        </authorList>
    </citation>
    <scope>NUCLEOTIDE SEQUENCE [LARGE SCALE GENOMIC DNA]</scope>
    <source>
        <strain>cv. Columbia</strain>
    </source>
</reference>
<reference key="4">
    <citation type="journal article" date="2017" name="Plant J.">
        <title>Araport11: a complete reannotation of the Arabidopsis thaliana reference genome.</title>
        <authorList>
            <person name="Cheng C.Y."/>
            <person name="Krishnakumar V."/>
            <person name="Chan A.P."/>
            <person name="Thibaud-Nissen F."/>
            <person name="Schobel S."/>
            <person name="Town C.D."/>
        </authorList>
    </citation>
    <scope>GENOME REANNOTATION</scope>
    <source>
        <strain>cv. Columbia</strain>
    </source>
</reference>
<reference key="5">
    <citation type="journal article" date="2003" name="Science">
        <title>Empirical analysis of transcriptional activity in the Arabidopsis genome.</title>
        <authorList>
            <person name="Yamada K."/>
            <person name="Lim J."/>
            <person name="Dale J.M."/>
            <person name="Chen H."/>
            <person name="Shinn P."/>
            <person name="Palm C.J."/>
            <person name="Southwick A.M."/>
            <person name="Wu H.C."/>
            <person name="Kim C.J."/>
            <person name="Nguyen M."/>
            <person name="Pham P.K."/>
            <person name="Cheuk R.F."/>
            <person name="Karlin-Newmann G."/>
            <person name="Liu S.X."/>
            <person name="Lam B."/>
            <person name="Sakano H."/>
            <person name="Wu T."/>
            <person name="Yu G."/>
            <person name="Miranda M."/>
            <person name="Quach H.L."/>
            <person name="Tripp M."/>
            <person name="Chang C.H."/>
            <person name="Lee J.M."/>
            <person name="Toriumi M.J."/>
            <person name="Chan M.M."/>
            <person name="Tang C.C."/>
            <person name="Onodera C.S."/>
            <person name="Deng J.M."/>
            <person name="Akiyama K."/>
            <person name="Ansari Y."/>
            <person name="Arakawa T."/>
            <person name="Banh J."/>
            <person name="Banno F."/>
            <person name="Bowser L."/>
            <person name="Brooks S.Y."/>
            <person name="Carninci P."/>
            <person name="Chao Q."/>
            <person name="Choy N."/>
            <person name="Enju A."/>
            <person name="Goldsmith A.D."/>
            <person name="Gurjal M."/>
            <person name="Hansen N.F."/>
            <person name="Hayashizaki Y."/>
            <person name="Johnson-Hopson C."/>
            <person name="Hsuan V.W."/>
            <person name="Iida K."/>
            <person name="Karnes M."/>
            <person name="Khan S."/>
            <person name="Koesema E."/>
            <person name="Ishida J."/>
            <person name="Jiang P.X."/>
            <person name="Jones T."/>
            <person name="Kawai J."/>
            <person name="Kamiya A."/>
            <person name="Meyers C."/>
            <person name="Nakajima M."/>
            <person name="Narusaka M."/>
            <person name="Seki M."/>
            <person name="Sakurai T."/>
            <person name="Satou M."/>
            <person name="Tamse R."/>
            <person name="Vaysberg M."/>
            <person name="Wallender E.K."/>
            <person name="Wong C."/>
            <person name="Yamamura Y."/>
            <person name="Yuan S."/>
            <person name="Shinozaki K."/>
            <person name="Davis R.W."/>
            <person name="Theologis A."/>
            <person name="Ecker J.R."/>
        </authorList>
    </citation>
    <scope>NUCLEOTIDE SEQUENCE [LARGE SCALE MRNA] (ISOFORM 2)</scope>
    <source>
        <strain>cv. Columbia</strain>
    </source>
</reference>
<reference key="6">
    <citation type="submission" date="2008-07" db="EMBL/GenBank/DDBJ databases">
        <title>Arabidopsis ORF clones.</title>
        <authorList>
            <person name="De Los Reyes C."/>
            <person name="Quan R."/>
            <person name="Chen H."/>
            <person name="Bautista V.R."/>
            <person name="Kim C.J."/>
            <person name="Ecker J.R."/>
        </authorList>
    </citation>
    <scope>NUCLEOTIDE SEQUENCE [LARGE SCALE MRNA] (ISOFORM 2)</scope>
    <source>
        <strain>cv. Columbia</strain>
    </source>
</reference>
<reference key="7">
    <citation type="journal article" date="2008" name="Genetics">
        <title>Low levels of polymorphism in genes that control the activation of defense response in Arabidopsis thaliana.</title>
        <authorList>
            <person name="Bakker E.G."/>
            <person name="Traw M.B."/>
            <person name="Toomajian C."/>
            <person name="Kreitman M."/>
            <person name="Bergelson J."/>
        </authorList>
    </citation>
    <scope>NUCLEOTIDE SEQUENCE [GENOMIC DNA] OF 99-312</scope>
    <scope>POLYMORPHISM</scope>
    <source>
        <strain>cv. Ag-0</strain>
        <strain>cv. An-1</strain>
        <strain>cv. Bay-0</strain>
        <strain>cv. Bil-5</strain>
        <strain>cv. Bil-7</strain>
        <strain>cv. Bor-1</strain>
        <strain>cv. Bor-4</strain>
        <strain>cv. Br-0</strain>
        <strain>cv. Bur-0</strain>
        <strain>cv. C24</strain>
        <strain>cv. CIBC-17</strain>
        <strain>cv. CIBC-5</strain>
        <strain>cv. Columbia</strain>
        <strain>cv. Ct-1</strain>
        <strain>cv. Cvi-0</strain>
        <strain>cv. Ed-1</strain>
        <strain>cv. Ed-2</strain>
        <strain>cv. Edi-0</strain>
        <strain>cv. Ei-2</strain>
        <strain>cv. Fab-2</strain>
        <strain>cv. Fab-4</strain>
        <strain>cv. Fei-0</strain>
        <strain>cv. Ga-0</strain>
        <strain>cv. Goettingen-22</strain>
        <strain>cv. Goettingen-7</strain>
        <strain>cv. Gu-0</strain>
        <strain>cv. Gy-0</strain>
        <strain>cv. HR-10</strain>
        <strain>cv. HR-5</strain>
        <strain>cv. Kas-2</strain>
        <strain>cv. Kin-0</strain>
        <strain>cv. KNO-10</strain>
        <strain>cv. KNO-18</strain>
        <strain>cv. Kon</strain>
        <strain>cv. KZ-1</strain>
        <strain>cv. KZ-9</strain>
        <strain>cv. Ler-1</strain>
        <strain>cv. Ll-0</strain>
        <strain>cv. Lov-1</strain>
        <strain>cv. Lov-5</strain>
        <strain>cv. Lp2-2</strain>
        <strain>cv. Lp2-6</strain>
        <strain>cv. Lz-0</strain>
        <strain>cv. Mr-0</strain>
        <strain>cv. Mrk-0</strain>
        <strain>cv. Ms-0</strain>
        <strain>cv. Mt-0</strain>
        <strain>cv. N13 Konchezero</strain>
        <strain>cv. Nd-1</strain>
        <strain>cv. NFA-10</strain>
        <strain>cv. NFA-8</strain>
        <strain>cv. Nok-3</strain>
        <strain>cv. Omo2-1</strain>
        <strain>cv. Omo2-3</strain>
        <strain>cv. Oy-0</strain>
        <strain>cv. Pna-10</strain>
        <strain>cv. Pna-17</strain>
        <strain>cv. Pro-0</strain>
        <strain>cv. Pu2-23</strain>
        <strain>cv. Pu2-7</strain>
        <strain>cv. Ra-0</strain>
        <strain>cv. REN-1</strain>
        <strain>cv. REN-11</strain>
        <strain>cv. Rmx-A02</strain>
        <strain>cv. Rmx-A180</strain>
        <strain>cv. RRS-10</strain>
        <strain>cv. RRS-7</strain>
        <strain>cv. Se-0</strain>
        <strain>cv. Sha</strain>
        <strain>cv. Sorbo</strain>
        <strain>cv. Spr1-2</strain>
        <strain>cv. Spr1-6</strain>
        <strain>cv. Sq-1</strain>
        <strain>cv. Sq-8</strain>
        <strain>cv. Tamm-2</strain>
        <strain>cv. Tamm-27</strain>
        <strain>cv. Ts-1</strain>
        <strain>cv. Ts-5</strain>
        <strain>cv. Tsu-1</strain>
        <strain>cv. Ull2-3</strain>
        <strain>cv. Ull2-5</strain>
        <strain>cv. Uod-1</strain>
        <strain>cv. Uod-7</strain>
        <strain>cv. Van-0</strain>
        <strain>cv. Var2-1</strain>
        <strain>cv. Var2-6</strain>
        <strain>cv. Wa-1</strain>
        <strain>cv. Wassilewskija</strain>
        <strain>cv. Wassilewskija-2</strain>
        <strain>cv. Wei-0</strain>
        <strain>cv. Wt-5</strain>
        <strain>cv. Yo-0</strain>
        <strain>cv. Zdr-1</strain>
        <strain>cv. Zdr-6</strain>
    </source>
</reference>
<reference key="8">
    <citation type="journal article" date="2003" name="Plant Mol. Biol.">
        <title>Microarray and differential display identify genes involved in jasmonate-dependent anther development.</title>
        <authorList>
            <person name="Mandaokar A."/>
            <person name="Kumar V.D."/>
            <person name="Amway M."/>
            <person name="Browse J."/>
        </authorList>
    </citation>
    <scope>INDUCTION BY JASMONATE</scope>
</reference>
<reference key="9">
    <citation type="journal article" date="2005" name="Phytochemistry">
        <title>Characterisation of recombinant epithiospecifier protein and its over-expression in Arabidopsis thaliana.</title>
        <authorList>
            <person name="de Torres-Zabala M."/>
            <person name="Grant M."/>
            <person name="Bones A.M."/>
            <person name="Bennett R."/>
            <person name="Lim Y.S."/>
            <person name="Kissen R."/>
            <person name="Rossiter J.T."/>
        </authorList>
    </citation>
    <scope>FUNCTION</scope>
    <scope>POLYMORPHISM</scope>
    <scope>CATALYTIC ACTIVITY</scope>
    <source>
        <strain>cv. Columbia</strain>
        <strain>cv. Ei-2</strain>
    </source>
</reference>
<reference key="10">
    <citation type="journal article" date="2006" name="J. Chem. Ecol.">
        <title>Altered glucosinolate hydrolysis in genetically engineered Arabidopsis thaliana and its influence on the larval development of Spodoptera littoralis.</title>
        <authorList>
            <person name="Burow M."/>
            <person name="Muller R."/>
            <person name="Gershenzon J."/>
            <person name="Wittstock U."/>
        </authorList>
    </citation>
    <scope>FUNCTION</scope>
</reference>
<reference key="11">
    <citation type="journal article" date="2007" name="Plant Mol. Biol.">
        <title>Cell- and tissue-specific localization and regulation of the epithiospecifier protein in Arabidopsis thaliana.</title>
        <authorList>
            <person name="Burow M."/>
            <person name="Rice M."/>
            <person name="Hause B."/>
            <person name="Gershenzon J."/>
            <person name="Wittstock U."/>
        </authorList>
    </citation>
    <scope>TISSUE SPECIFICITY</scope>
</reference>
<reference key="12">
    <citation type="journal article" date="2007" name="Plant Cell">
        <title>The antagonist function of Arabidopsis WRKY53 and ESR/ESP in leaf senescence is modulated by the jasmonic and salicylic acid equilibrium.</title>
        <authorList>
            <person name="Miao Y."/>
            <person name="Zentgraf U."/>
        </authorList>
    </citation>
    <scope>FUNCTION</scope>
    <scope>DISRUPTION PHENOTYPE</scope>
    <scope>SUBCELLULAR LOCATION</scope>
    <scope>INTERACTION WITH WRKY53</scope>
</reference>
<reference key="13">
    <citation type="journal article" date="2008" name="Phytochemistry">
        <title>ESP and ESM1 mediate indol-3-acetonitrile production from indol-3-ylmethyl glucosinolate in Arabidopsis.</title>
        <authorList>
            <person name="Burow M."/>
            <person name="Zhang Z.-Y."/>
            <person name="Ober J.A."/>
            <person name="Lambrix V.M."/>
            <person name="Wittstock U."/>
            <person name="Gershenzon J."/>
            <person name="Kliebenstein D.J."/>
        </authorList>
    </citation>
    <scope>FUNCTION</scope>
</reference>
<reference key="14">
    <citation type="journal article" date="2009" name="J. Biol. Chem.">
        <title>Nitrile-specifier proteins involved in glucosinolate hydrolysis in Arabidopsis thaliana.</title>
        <authorList>
            <person name="Kissen R."/>
            <person name="Bones A.M."/>
        </authorList>
    </citation>
    <scope>FUNCTION</scope>
    <scope>CATALYTIC ACTIVITY</scope>
    <scope>GENE FAMILY</scope>
    <source>
        <strain>cv. C24</strain>
        <strain>cv. Columbia</strain>
        <strain>cv. Ru-0</strain>
    </source>
</reference>
<reference key="15">
    <citation type="journal article" date="2012" name="Mol. Cell. Proteomics">
        <title>Comparative large-scale characterisation of plant vs. mammal proteins reveals similar and idiosyncratic N-alpha acetylation features.</title>
        <authorList>
            <person name="Bienvenut W.V."/>
            <person name="Sumpton D."/>
            <person name="Martinez A."/>
            <person name="Lilla S."/>
            <person name="Espagne C."/>
            <person name="Meinnel T."/>
            <person name="Giglione C."/>
        </authorList>
    </citation>
    <scope>CLEAVAGE OF INITIATOR METHIONINE [LARGE SCALE ANALYSIS]</scope>
    <scope>IDENTIFICATION BY MASS SPECTROMETRY [LARGE SCALE ANALYSIS]</scope>
</reference>
<reference key="16">
    <citation type="journal article" date="2012" name="Phytochemistry">
        <title>Characterization of recombinant nitrile-specifier proteins (NSPs) of Arabidopsis thaliana: dependency on Fe(II) ions and the effect of glucosinolate substrate and reaction conditions.</title>
        <authorList>
            <person name="Kong X.Y."/>
            <person name="Kissen R."/>
            <person name="Bones A.M."/>
        </authorList>
    </citation>
    <scope>FUNCTION</scope>
    <scope>CATALYTIC ACTIVITY</scope>
</reference>
<reference key="17">
    <citation type="journal article" date="2014" name="Plant Mol. Biol.">
        <title>Molecular models and mutational analyses of plant specifier proteins suggest active site residues and reaction mechanism.</title>
        <authorList>
            <person name="Brandt W."/>
            <person name="Backenkoehler A."/>
            <person name="Schulze E."/>
            <person name="Plock A."/>
            <person name="Herberg T."/>
            <person name="Roese E."/>
            <person name="Wittstock U."/>
        </authorList>
    </citation>
    <scope>FUNCTION</scope>
    <scope>CATALYTIC ACTIVITY</scope>
    <scope>MUTAGENESIS OF ASN-45; LYS-46; ARG-94; PHE-130; GLY-186; LYS-211; VAL-244; GLU-260; ASP-264; PRO-300 AND ARG-301</scope>
    <scope>SUBSTRATE BINDING</scope>
    <scope>IRON BINDING</scope>
    <scope>COFACTOR</scope>
    <scope>ACTIVE SITE</scope>
</reference>
<reference key="18">
    <citation type="journal article" date="2017" name="Biochem. Biophys. Res. Commun.">
        <title>Crystal structure of the nitrile-specifier protein NSP1 from Arabidopsis thaliana.</title>
        <authorList>
            <person name="Zhang W."/>
            <person name="Zhou Y."/>
            <person name="Wang K."/>
            <person name="Dong Y."/>
            <person name="Wang W."/>
            <person name="Feng Y."/>
        </authorList>
    </citation>
    <scope>ACTIVE SITE</scope>
    <scope>IRON BINDING</scope>
    <scope>SUBSTRATE BINDING</scope>
</reference>
<reference key="19">
    <citation type="journal article" date="2016" name="Biochem. Biophys. Res. Commun.">
        <title>Crystal structure of the epithiospecifier protein, ESP from Arabidopsis thaliana provides insights into its product specificity.</title>
        <authorList>
            <person name="Zhang W."/>
            <person name="Wang W."/>
            <person name="Liu Z."/>
            <person name="Xie Y."/>
            <person name="Wang H."/>
            <person name="Mu Y."/>
            <person name="Huang Y."/>
            <person name="Feng Y."/>
        </authorList>
    </citation>
    <scope>X-RAY CRYSTALLOGRAPHY (2.31 ANGSTROMS)</scope>
    <scope>SUBUNIT</scope>
    <scope>ACTIVE SITE</scope>
    <scope>SUBSTRATE BINDING</scope>
    <scope>IRON BINDING</scope>
    <scope>COFACTOR</scope>
</reference>
<comment type="function">
    <text evidence="2 5 7 8 9 11 12 13 14">Specifier protein that contributes to constitutive and herbivore-induced simple nitrile formation (By similarity). Converts glucosinolates both to epithionitriles and to simple nitriles in the presence of myrosinase (PubMed:23999604). Promotes the formation of epithionitriles after hydrolysis of alkenylglucosinolates containing a terminal double bond. Mediates indol-3-ylacetonitrile (IACN) production from indol-3-ylmethylglucosinolate (glucobrassicin) (PubMed:22954730). Triggers the production of 3,4-epithiobutylnitrile from 2-propenylisothiocyanate, product of 2-propenylglucosinolate (sinigrin) catalysis by myrosinase (PubMed:19224919, PubMed:22954730). Seems inactive toward benzylglucosinolate (glucotropaeolin) (PubMed:22954730). Acts as a negative regulator of senescence.</text>
</comment>
<comment type="catalytic activity">
    <reaction evidence="5 7 13 14">
        <text>a (Z)-N-(sulfonatooxy)alkenimidothioate = an epithionitrile + sulfate</text>
        <dbReference type="Rhea" id="RHEA:69228"/>
        <dbReference type="ChEBI" id="CHEBI:16189"/>
        <dbReference type="ChEBI" id="CHEBI:183084"/>
        <dbReference type="ChEBI" id="CHEBI:183085"/>
        <dbReference type="EC" id="4.8.1.6"/>
    </reaction>
</comment>
<comment type="catalytic activity">
    <reaction evidence="12 14">
        <text>a (Z)-N-(sulfonatooxy)alkanimidothioate = a nitrile + sulfur + sulfate</text>
        <dbReference type="Rhea" id="RHEA:59956"/>
        <dbReference type="ChEBI" id="CHEBI:16189"/>
        <dbReference type="ChEBI" id="CHEBI:18379"/>
        <dbReference type="ChEBI" id="CHEBI:26833"/>
        <dbReference type="ChEBI" id="CHEBI:183089"/>
        <dbReference type="EC" id="4.8.1.5"/>
    </reaction>
</comment>
<comment type="catalytic activity">
    <reaction evidence="13">
        <text>(Z)-(indol-3-yl)-N-(sulfonatooxy)methanimidothioate = (indol-3-yl)acetonitrile + sulfur + sulfate</text>
        <dbReference type="Rhea" id="RHEA:76227"/>
        <dbReference type="ChEBI" id="CHEBI:16189"/>
        <dbReference type="ChEBI" id="CHEBI:17566"/>
        <dbReference type="ChEBI" id="CHEBI:26833"/>
        <dbReference type="ChEBI" id="CHEBI:195189"/>
    </reaction>
</comment>
<comment type="cofactor">
    <cofactor evidence="5 24 25">
        <name>Fe(2+)</name>
        <dbReference type="ChEBI" id="CHEBI:29033"/>
    </cofactor>
</comment>
<comment type="activity regulation">
    <text evidence="5">Not dependent on the presence of Fe(2+) although supplemental Fe(2+) increases nitriles formation.</text>
</comment>
<comment type="subunit">
    <text evidence="9 15">Homodimer (PubMed:27498030). Interacts with WRKY53 (PubMed:17369373).</text>
</comment>
<comment type="interaction">
    <interactant intactId="EBI-1997188">
        <id>Q8RY71</id>
    </interactant>
    <interactant intactId="EBI-1235980">
        <id>Q9SUP6</id>
        <label>WRKY53</label>
    </interactant>
    <organismsDiffer>false</organismsDiffer>
    <experiments>6</experiments>
</comment>
<comment type="subcellular location">
    <subcellularLocation>
        <location evidence="9">Cytoplasm</location>
    </subcellularLocation>
    <subcellularLocation>
        <location evidence="9">Nucleus</location>
    </subcellularLocation>
    <text>Brought to the nucleus after interaction with WRKY53.</text>
</comment>
<comment type="alternative products">
    <event type="alternative splicing"/>
    <isoform>
        <id>Q8RY71-1</id>
        <name>1</name>
        <sequence type="displayed"/>
    </isoform>
    <isoform>
        <id>Q8RY71-2</id>
        <name>2</name>
        <sequence type="described" ref="VSP_036395"/>
    </isoform>
</comment>
<comment type="tissue specificity">
    <text evidence="10">Expressed in epidermal cells of all above-ground organs except the anthers, in cambial cells of leaf and stem vascular bundles, and in glucosinolates rich S-cells found in stems just below the inflorescence. Absent from roots.</text>
</comment>
<comment type="induction">
    <text evidence="6">By jasmonate.</text>
</comment>
<comment type="disruption phenotype">
    <text evidence="9">Accelerated leaf senescence and increased pathogen damages.</text>
</comment>
<comment type="miscellaneous">
    <text evidence="1">The proton donor differs depending on substrates.</text>
</comment>
<comment type="miscellaneous">
    <text evidence="23">Does not contain the mannose-binding lectin domain present in other members of the family.</text>
</comment>
<comment type="miscellaneous">
    <text>ESP is functional in cv. Landsberg erecta while the gene encoding the protein is not expressed in cv. Columbia, cv. Da(1)-12 and cv. Ru-0. ESP activity is regulated at the transcriptional, the post-transcriptional and the post-translational levels.</text>
</comment>
<comment type="sequence caution" evidence="23">
    <conflict type="erroneous gene model prediction">
        <sequence resource="EMBL-CDS" id="AAD25776"/>
    </conflict>
</comment>
<protein>
    <recommendedName>
        <fullName evidence="23">N-(sulfonatooxy)alkenimidothioic acid sulfate-lyase (epithionitrile-forming)</fullName>
        <ecNumber evidence="12 14">4.8.1.5</ecNumber>
        <ecNumber evidence="5 7 13 14">4.8.1.6</ecNumber>
    </recommendedName>
    <alternativeName>
        <fullName evidence="23">Epithionitrile-specifier protein</fullName>
    </alternativeName>
    <alternativeName>
        <fullName evidence="16 18 21">Epithiospecifier protein</fullName>
        <shortName evidence="16 18 21">AtESP</shortName>
    </alternativeName>
    <alternativeName>
        <fullName evidence="19">Protein EPITHIOSPECIFYING SENESCENCE REGULATOR</fullName>
        <shortName evidence="19">AtESR</shortName>
    </alternativeName>
</protein>